<sequence>MSKNERMVGISRRTLVKSTAIGSLALAAGGFSLPFTLRNAAAAVQQAREKVVWGACSVNCGSRCALRLHVKDNEVTWVETDNTGSDEYGNHQVRACLRGRSIRRRINHPDRLNYPMKRVGKRGEGKFERISWDEALDTIASSLKKTVEQYGNEAVYIQYSSGIVGGNMTRSSPSASAVKRLMNCYGGSLNQYGSYSTAQISCAMPYTYGSNDGNSTTDIENSKLVVMFGNNPAETRMSGGGITYLLEKAREKSNAKMIVIDPRYTDTAAGREDEWLPIRPGTDAALVAGIAWVLINENLVDQPFLDKYCVGYDEKTLPADAPKNGHYKAYILGEGDDKTAKTPQWASQITGIPEDRIIKLAREIGTAKPAYICQGWGPQRQANGELTARAIAMLPILTGNVGISGGNSGARESTYTITIERLPVLDNPVKTSISCFSWTDAIDHGPQMTAIRDGVRGKDKLDVPIKFIWNYAGNTLVNQHSDINKTHEILQDESKCEMIVVIENFMTSSAKYADILLPDLMTVEQEDIIPNDYAGNMGYLIFLQPVTSEKFERKPIYWILSEVAKRLGPDVYQKFTEGRTQEQWLQHLYAKMLAKDPALPSYDELKKMGIYKRKDPNGHFVAYKAFRDDPEANPLKTPSGKIEIYSSRLAEIARTWELEKDEVISPLPVYASTFEGWNSPERRTFPLQLFGFHYKSRTHSTYGNIDLLKAACRQEVWINPIDAQKRGIANGDMVRVFNHRGEVRLPAKVTPRILPGVSAMGQGAWHEANMSGDKIDHGGCVNTLTTLRPSPLAKGNPQHTNLVEIEKI</sequence>
<proteinExistence type="evidence at protein level"/>
<accession>P77374</accession>
<accession>P77291</accession>
<feature type="signal peptide" description="Tat-type signal" evidence="2">
    <location>
        <begin position="1"/>
        <end position="43"/>
    </location>
</feature>
<feature type="chain" id="PRO_0000019147" description="Putative dimethyl sulfoxide reductase chain YnfE">
    <location>
        <begin position="44"/>
        <end position="808"/>
    </location>
</feature>
<feature type="domain" description="4Fe-4S Mo/W bis-MGD-type" evidence="3">
    <location>
        <begin position="49"/>
        <end position="110"/>
    </location>
</feature>
<feature type="binding site" evidence="3">
    <location>
        <position position="56"/>
    </location>
    <ligand>
        <name>[4Fe-4S] cluster</name>
        <dbReference type="ChEBI" id="CHEBI:49883"/>
    </ligand>
</feature>
<feature type="binding site" evidence="3">
    <location>
        <position position="60"/>
    </location>
    <ligand>
        <name>[4Fe-4S] cluster</name>
        <dbReference type="ChEBI" id="CHEBI:49883"/>
    </ligand>
</feature>
<feature type="binding site" evidence="3">
    <location>
        <position position="64"/>
    </location>
    <ligand>
        <name>[4Fe-4S] cluster</name>
        <dbReference type="ChEBI" id="CHEBI:49883"/>
    </ligand>
</feature>
<feature type="binding site" evidence="3">
    <location>
        <position position="96"/>
    </location>
    <ligand>
        <name>[4Fe-4S] cluster</name>
        <dbReference type="ChEBI" id="CHEBI:49883"/>
    </ligand>
</feature>
<feature type="binding site" evidence="1">
    <location>
        <position position="196"/>
    </location>
    <ligand>
        <name>Mo-bis(molybdopterin guanine dinucleotide)</name>
        <dbReference type="ChEBI" id="CHEBI:60539"/>
    </ligand>
    <ligandPart>
        <name>Mo</name>
        <dbReference type="ChEBI" id="CHEBI:28685"/>
    </ligandPart>
</feature>
<reference key="1">
    <citation type="journal article" date="1996" name="DNA Res.">
        <title>A 570-kb DNA sequence of the Escherichia coli K-12 genome corresponding to the 28.0-40.1 min region on the linkage map.</title>
        <authorList>
            <person name="Aiba H."/>
            <person name="Baba T."/>
            <person name="Fujita K."/>
            <person name="Hayashi K."/>
            <person name="Inada T."/>
            <person name="Isono K."/>
            <person name="Itoh T."/>
            <person name="Kasai H."/>
            <person name="Kashimoto K."/>
            <person name="Kimura S."/>
            <person name="Kitakawa M."/>
            <person name="Kitagawa M."/>
            <person name="Makino K."/>
            <person name="Miki T."/>
            <person name="Mizobuchi K."/>
            <person name="Mori H."/>
            <person name="Mori T."/>
            <person name="Motomura K."/>
            <person name="Nakade S."/>
            <person name="Nakamura Y."/>
            <person name="Nashimoto H."/>
            <person name="Nishio Y."/>
            <person name="Oshima T."/>
            <person name="Saito N."/>
            <person name="Sampei G."/>
            <person name="Seki Y."/>
            <person name="Sivasundaram S."/>
            <person name="Tagami H."/>
            <person name="Takeda J."/>
            <person name="Takemoto K."/>
            <person name="Takeuchi Y."/>
            <person name="Wada C."/>
            <person name="Yamamoto Y."/>
            <person name="Horiuchi T."/>
        </authorList>
    </citation>
    <scope>NUCLEOTIDE SEQUENCE [LARGE SCALE GENOMIC DNA]</scope>
    <source>
        <strain>K12 / W3110 / ATCC 27325 / DSM 5911</strain>
    </source>
</reference>
<reference key="2">
    <citation type="journal article" date="1997" name="Science">
        <title>The complete genome sequence of Escherichia coli K-12.</title>
        <authorList>
            <person name="Blattner F.R."/>
            <person name="Plunkett G. III"/>
            <person name="Bloch C.A."/>
            <person name="Perna N.T."/>
            <person name="Burland V."/>
            <person name="Riley M."/>
            <person name="Collado-Vides J."/>
            <person name="Glasner J.D."/>
            <person name="Rode C.K."/>
            <person name="Mayhew G.F."/>
            <person name="Gregor J."/>
            <person name="Davis N.W."/>
            <person name="Kirkpatrick H.A."/>
            <person name="Goeden M.A."/>
            <person name="Rose D.J."/>
            <person name="Mau B."/>
            <person name="Shao Y."/>
        </authorList>
    </citation>
    <scope>NUCLEOTIDE SEQUENCE [LARGE SCALE GENOMIC DNA]</scope>
    <source>
        <strain>K12 / MG1655 / ATCC 47076</strain>
    </source>
</reference>
<reference key="3">
    <citation type="journal article" date="2006" name="Mol. Syst. Biol.">
        <title>Highly accurate genome sequences of Escherichia coli K-12 strains MG1655 and W3110.</title>
        <authorList>
            <person name="Hayashi K."/>
            <person name="Morooka N."/>
            <person name="Yamamoto Y."/>
            <person name="Fujita K."/>
            <person name="Isono K."/>
            <person name="Choi S."/>
            <person name="Ohtsubo E."/>
            <person name="Baba T."/>
            <person name="Wanner B.L."/>
            <person name="Mori H."/>
            <person name="Horiuchi T."/>
        </authorList>
    </citation>
    <scope>NUCLEOTIDE SEQUENCE [LARGE SCALE GENOMIC DNA]</scope>
    <source>
        <strain>K12 / W3110 / ATCC 27325 / DSM 5911</strain>
    </source>
</reference>
<reference key="4">
    <citation type="journal article" date="2007" name="J. Biol. Chem.">
        <title>Export pathway selectivity of Escherichia coli twin arginine translocation signal peptides.</title>
        <authorList>
            <person name="Tullman-Ercek D."/>
            <person name="DeLisa M.P."/>
            <person name="Kawarasaki Y."/>
            <person name="Iranpour P."/>
            <person name="Ribnicky B."/>
            <person name="Palmer T."/>
            <person name="Georgiou G."/>
        </authorList>
    </citation>
    <scope>EXPORT VIA THE TAT-SYSTEM</scope>
</reference>
<dbReference type="EC" id="1.8.99.-"/>
<dbReference type="EMBL" id="U00096">
    <property type="protein sequence ID" value="AAC74659.1"/>
    <property type="molecule type" value="Genomic_DNA"/>
</dbReference>
<dbReference type="EMBL" id="AP009048">
    <property type="protein sequence ID" value="BAA15311.1"/>
    <property type="molecule type" value="Genomic_DNA"/>
</dbReference>
<dbReference type="PIR" id="E64914">
    <property type="entry name" value="E64914"/>
</dbReference>
<dbReference type="RefSeq" id="NP_416104.1">
    <property type="nucleotide sequence ID" value="NC_000913.3"/>
</dbReference>
<dbReference type="RefSeq" id="WP_000041675.1">
    <property type="nucleotide sequence ID" value="NZ_SSZK01000001.1"/>
</dbReference>
<dbReference type="SMR" id="P77374"/>
<dbReference type="BioGRID" id="4261571">
    <property type="interactions" value="13"/>
</dbReference>
<dbReference type="DIP" id="DIP-12765N"/>
<dbReference type="FunCoup" id="P77374">
    <property type="interactions" value="105"/>
</dbReference>
<dbReference type="IntAct" id="P77374">
    <property type="interactions" value="5"/>
</dbReference>
<dbReference type="STRING" id="511145.b1587"/>
<dbReference type="TCDB" id="5.A.3.3.1">
    <property type="family name" value="the prokaryotic molybdopterin-containing oxidoreductase (pmo) family"/>
</dbReference>
<dbReference type="jPOST" id="P77374"/>
<dbReference type="PaxDb" id="511145-b1587"/>
<dbReference type="EnsemblBacteria" id="AAC74659">
    <property type="protein sequence ID" value="AAC74659"/>
    <property type="gene ID" value="b1587"/>
</dbReference>
<dbReference type="GeneID" id="946135"/>
<dbReference type="KEGG" id="ecj:JW1579"/>
<dbReference type="KEGG" id="eco:b1587"/>
<dbReference type="KEGG" id="ecoc:C3026_09145"/>
<dbReference type="PATRIC" id="fig|1411691.4.peg.675"/>
<dbReference type="EchoBASE" id="EB3604"/>
<dbReference type="eggNOG" id="COG0243">
    <property type="taxonomic scope" value="Bacteria"/>
</dbReference>
<dbReference type="HOGENOM" id="CLU_000422_13_3_6"/>
<dbReference type="InParanoid" id="P77374"/>
<dbReference type="OMA" id="WMHNVPA"/>
<dbReference type="OrthoDB" id="9815647at2"/>
<dbReference type="PhylomeDB" id="P77374"/>
<dbReference type="BioCyc" id="EcoCyc:G6845-MONOMER"/>
<dbReference type="BioCyc" id="MetaCyc:G6845-MONOMER"/>
<dbReference type="PRO" id="PR:P77374"/>
<dbReference type="Proteomes" id="UP000000625">
    <property type="component" value="Chromosome"/>
</dbReference>
<dbReference type="GO" id="GO:0030288">
    <property type="term" value="C:outer membrane-bounded periplasmic space"/>
    <property type="evidence" value="ECO:0000318"/>
    <property type="project" value="GO_Central"/>
</dbReference>
<dbReference type="GO" id="GO:0005886">
    <property type="term" value="C:plasma membrane"/>
    <property type="evidence" value="ECO:0007669"/>
    <property type="project" value="UniProtKB-SubCell"/>
</dbReference>
<dbReference type="GO" id="GO:0051539">
    <property type="term" value="F:4 iron, 4 sulfur cluster binding"/>
    <property type="evidence" value="ECO:0007669"/>
    <property type="project" value="UniProtKB-KW"/>
</dbReference>
<dbReference type="GO" id="GO:0009389">
    <property type="term" value="F:dimethyl sulfoxide reductase activity"/>
    <property type="evidence" value="ECO:0007669"/>
    <property type="project" value="InterPro"/>
</dbReference>
<dbReference type="GO" id="GO:0009055">
    <property type="term" value="F:electron transfer activity"/>
    <property type="evidence" value="ECO:0000318"/>
    <property type="project" value="GO_Central"/>
</dbReference>
<dbReference type="GO" id="GO:0030151">
    <property type="term" value="F:molybdenum ion binding"/>
    <property type="evidence" value="ECO:0000318"/>
    <property type="project" value="GO_Central"/>
</dbReference>
<dbReference type="GO" id="GO:0043546">
    <property type="term" value="F:molybdopterin cofactor binding"/>
    <property type="evidence" value="ECO:0007669"/>
    <property type="project" value="InterPro"/>
</dbReference>
<dbReference type="GO" id="GO:0033797">
    <property type="term" value="F:selenate reductase activity"/>
    <property type="evidence" value="ECO:0000315"/>
    <property type="project" value="EcoCyc"/>
</dbReference>
<dbReference type="GO" id="GO:0009061">
    <property type="term" value="P:anaerobic respiration"/>
    <property type="evidence" value="ECO:0000318"/>
    <property type="project" value="GO_Central"/>
</dbReference>
<dbReference type="CDD" id="cd02794">
    <property type="entry name" value="MopB_CT_DmsA-EC"/>
    <property type="match status" value="1"/>
</dbReference>
<dbReference type="CDD" id="cd02770">
    <property type="entry name" value="MopB_DmsA-EC"/>
    <property type="match status" value="1"/>
</dbReference>
<dbReference type="FunFam" id="2.40.40.20:FF:000010">
    <property type="entry name" value="Anaerobic dimethyl sulfoxide reductase subunit A"/>
    <property type="match status" value="1"/>
</dbReference>
<dbReference type="FunFam" id="3.40.50.740:FF:000015">
    <property type="entry name" value="Anaerobic dimethyl sulfoxide reductase subunit A"/>
    <property type="match status" value="1"/>
</dbReference>
<dbReference type="FunFam" id="3.40.228.10:FF:000004">
    <property type="entry name" value="Dimethyl sulfoxide reductase subunit A"/>
    <property type="match status" value="1"/>
</dbReference>
<dbReference type="Gene3D" id="2.40.40.20">
    <property type="match status" value="1"/>
</dbReference>
<dbReference type="Gene3D" id="3.40.50.740">
    <property type="match status" value="1"/>
</dbReference>
<dbReference type="Gene3D" id="2.20.25.90">
    <property type="entry name" value="ADC-like domains"/>
    <property type="match status" value="1"/>
</dbReference>
<dbReference type="Gene3D" id="3.40.228.10">
    <property type="entry name" value="Dimethylsulfoxide Reductase, domain 2"/>
    <property type="match status" value="1"/>
</dbReference>
<dbReference type="InterPro" id="IPR011888">
    <property type="entry name" value="Anaer_DMSO_reductase"/>
</dbReference>
<dbReference type="InterPro" id="IPR009010">
    <property type="entry name" value="Asp_de-COase-like_dom_sf"/>
</dbReference>
<dbReference type="InterPro" id="IPR006657">
    <property type="entry name" value="MoPterin_dinucl-bd_dom"/>
</dbReference>
<dbReference type="InterPro" id="IPR006656">
    <property type="entry name" value="Mopterin_OxRdtase"/>
</dbReference>
<dbReference type="InterPro" id="IPR006963">
    <property type="entry name" value="Mopterin_OxRdtase_4Fe-4S_dom"/>
</dbReference>
<dbReference type="InterPro" id="IPR006655">
    <property type="entry name" value="Mopterin_OxRdtase_prok_CS"/>
</dbReference>
<dbReference type="InterPro" id="IPR050612">
    <property type="entry name" value="Prok_Mopterin_Oxidored"/>
</dbReference>
<dbReference type="InterPro" id="IPR006311">
    <property type="entry name" value="TAT_signal"/>
</dbReference>
<dbReference type="InterPro" id="IPR049754">
    <property type="entry name" value="YnfE"/>
</dbReference>
<dbReference type="NCBIfam" id="TIGR02166">
    <property type="entry name" value="dmsA_ynfE"/>
    <property type="match status" value="1"/>
</dbReference>
<dbReference type="NCBIfam" id="NF041885">
    <property type="entry name" value="selenate_YnfE"/>
    <property type="match status" value="1"/>
</dbReference>
<dbReference type="PANTHER" id="PTHR43742:SF7">
    <property type="entry name" value="DIMETHYL SULFOXIDE REDUCTASE CHAIN YNFE-RELATED"/>
    <property type="match status" value="1"/>
</dbReference>
<dbReference type="PANTHER" id="PTHR43742">
    <property type="entry name" value="TRIMETHYLAMINE-N-OXIDE REDUCTASE"/>
    <property type="match status" value="1"/>
</dbReference>
<dbReference type="Pfam" id="PF04879">
    <property type="entry name" value="Molybdop_Fe4S4"/>
    <property type="match status" value="1"/>
</dbReference>
<dbReference type="Pfam" id="PF00384">
    <property type="entry name" value="Molybdopterin"/>
    <property type="match status" value="1"/>
</dbReference>
<dbReference type="Pfam" id="PF01568">
    <property type="entry name" value="Molydop_binding"/>
    <property type="match status" value="1"/>
</dbReference>
<dbReference type="SMART" id="SM00926">
    <property type="entry name" value="Molybdop_Fe4S4"/>
    <property type="match status" value="1"/>
</dbReference>
<dbReference type="SUPFAM" id="SSF50692">
    <property type="entry name" value="ADC-like"/>
    <property type="match status" value="1"/>
</dbReference>
<dbReference type="SUPFAM" id="SSF53706">
    <property type="entry name" value="Formate dehydrogenase/DMSO reductase, domains 1-3"/>
    <property type="match status" value="1"/>
</dbReference>
<dbReference type="PROSITE" id="PS51669">
    <property type="entry name" value="4FE4S_MOW_BIS_MGD"/>
    <property type="match status" value="1"/>
</dbReference>
<dbReference type="PROSITE" id="PS00932">
    <property type="entry name" value="MOLYBDOPTERIN_PROK_3"/>
    <property type="match status" value="1"/>
</dbReference>
<dbReference type="PROSITE" id="PS51318">
    <property type="entry name" value="TAT"/>
    <property type="match status" value="1"/>
</dbReference>
<organism>
    <name type="scientific">Escherichia coli (strain K12)</name>
    <dbReference type="NCBI Taxonomy" id="83333"/>
    <lineage>
        <taxon>Bacteria</taxon>
        <taxon>Pseudomonadati</taxon>
        <taxon>Pseudomonadota</taxon>
        <taxon>Gammaproteobacteria</taxon>
        <taxon>Enterobacterales</taxon>
        <taxon>Enterobacteriaceae</taxon>
        <taxon>Escherichia</taxon>
    </lineage>
</organism>
<comment type="function">
    <text evidence="1">Terminal reductase during anaerobic growth on various sulfoxide and N-oxide compounds.</text>
</comment>
<comment type="cofactor">
    <cofactor evidence="4">
        <name>[4Fe-4S] cluster</name>
        <dbReference type="ChEBI" id="CHEBI:49883"/>
    </cofactor>
    <text evidence="4">Binds 1 [4Fe-4S] cluster.</text>
</comment>
<comment type="cofactor">
    <cofactor evidence="1">
        <name>Mo-bis(molybdopterin guanine dinucleotide)</name>
        <dbReference type="ChEBI" id="CHEBI:60539"/>
    </cofactor>
    <text evidence="1">Binds 1 molybdenum-bis(molybdopterin guanine dinucleotide) (Mo-bis-MGD) cofactor per subunit.</text>
</comment>
<comment type="interaction">
    <interactant intactId="EBI-556186">
        <id>P77374</id>
    </interactant>
    <interactant intactId="EBI-4406374">
        <id>P69853</id>
        <label>dmsD</label>
    </interactant>
    <organismsDiffer>false</organismsDiffer>
    <experiments>3</experiments>
</comment>
<comment type="subcellular location">
    <subcellularLocation>
        <location evidence="1">Cell membrane</location>
        <topology evidence="1">Peripheral membrane protein</topology>
        <orientation evidence="1">Cytoplasmic side</orientation>
    </subcellularLocation>
</comment>
<comment type="PTM">
    <text>Exported by the Tat system. The position of the signal peptide cleavage has not been experimentally proven.</text>
</comment>
<comment type="similarity">
    <text evidence="4">Belongs to the prokaryotic molybdopterin-containing oxidoreductase family.</text>
</comment>
<evidence type="ECO:0000250" key="1"/>
<evidence type="ECO:0000255" key="2">
    <source>
        <dbReference type="PROSITE-ProRule" id="PRU00648"/>
    </source>
</evidence>
<evidence type="ECO:0000255" key="3">
    <source>
        <dbReference type="PROSITE-ProRule" id="PRU01004"/>
    </source>
</evidence>
<evidence type="ECO:0000305" key="4"/>
<gene>
    <name type="primary">ynfE</name>
    <name type="ordered locus">b1587</name>
    <name type="ordered locus">JW1579</name>
</gene>
<protein>
    <recommendedName>
        <fullName>Putative dimethyl sulfoxide reductase chain YnfE</fullName>
        <shortName>DMSO reductase</shortName>
        <ecNumber>1.8.99.-</ecNumber>
    </recommendedName>
</protein>
<name>YNFE_ECOLI</name>
<keyword id="KW-0004">4Fe-4S</keyword>
<keyword id="KW-1003">Cell membrane</keyword>
<keyword id="KW-0408">Iron</keyword>
<keyword id="KW-0411">Iron-sulfur</keyword>
<keyword id="KW-0472">Membrane</keyword>
<keyword id="KW-0479">Metal-binding</keyword>
<keyword id="KW-0500">Molybdenum</keyword>
<keyword id="KW-0560">Oxidoreductase</keyword>
<keyword id="KW-1185">Reference proteome</keyword>
<keyword id="KW-0732">Signal</keyword>